<accession>B7KIT4</accession>
<keyword id="KW-0997">Cell inner membrane</keyword>
<keyword id="KW-1003">Cell membrane</keyword>
<keyword id="KW-0407">Ion channel</keyword>
<keyword id="KW-0406">Ion transport</keyword>
<keyword id="KW-0472">Membrane</keyword>
<keyword id="KW-0479">Metal-binding</keyword>
<keyword id="KW-1185">Reference proteome</keyword>
<keyword id="KW-0915">Sodium</keyword>
<keyword id="KW-0812">Transmembrane</keyword>
<keyword id="KW-1133">Transmembrane helix</keyword>
<keyword id="KW-0813">Transport</keyword>
<reference key="1">
    <citation type="journal article" date="2011" name="MBio">
        <title>Novel metabolic attributes of the genus Cyanothece, comprising a group of unicellular nitrogen-fixing Cyanobacteria.</title>
        <authorList>
            <person name="Bandyopadhyay A."/>
            <person name="Elvitigala T."/>
            <person name="Welsh E."/>
            <person name="Stockel J."/>
            <person name="Liberton M."/>
            <person name="Min H."/>
            <person name="Sherman L.A."/>
            <person name="Pakrasi H.B."/>
        </authorList>
    </citation>
    <scope>NUCLEOTIDE SEQUENCE [LARGE SCALE GENOMIC DNA]</scope>
    <source>
        <strain>PCC 7424</strain>
    </source>
</reference>
<name>FLUC_GLOC7</name>
<feature type="chain" id="PRO_1000125120" description="Fluoride-specific ion channel FluC">
    <location>
        <begin position="1"/>
        <end position="123"/>
    </location>
</feature>
<feature type="transmembrane region" description="Helical" evidence="1">
    <location>
        <begin position="1"/>
        <end position="21"/>
    </location>
</feature>
<feature type="transmembrane region" description="Helical" evidence="1">
    <location>
        <begin position="32"/>
        <end position="52"/>
    </location>
</feature>
<feature type="transmembrane region" description="Helical" evidence="1">
    <location>
        <begin position="64"/>
        <end position="84"/>
    </location>
</feature>
<feature type="transmembrane region" description="Helical" evidence="1">
    <location>
        <begin position="99"/>
        <end position="119"/>
    </location>
</feature>
<feature type="binding site" evidence="1">
    <location>
        <position position="74"/>
    </location>
    <ligand>
        <name>Na(+)</name>
        <dbReference type="ChEBI" id="CHEBI:29101"/>
        <note>structural</note>
    </ligand>
</feature>
<feature type="binding site" evidence="1">
    <location>
        <position position="77"/>
    </location>
    <ligand>
        <name>Na(+)</name>
        <dbReference type="ChEBI" id="CHEBI:29101"/>
        <note>structural</note>
    </ligand>
</feature>
<protein>
    <recommendedName>
        <fullName evidence="1">Fluoride-specific ion channel FluC</fullName>
    </recommendedName>
</protein>
<dbReference type="EMBL" id="CP001291">
    <property type="protein sequence ID" value="ACK70770.1"/>
    <property type="molecule type" value="Genomic_DNA"/>
</dbReference>
<dbReference type="RefSeq" id="WP_015954374.1">
    <property type="nucleotide sequence ID" value="NC_011729.1"/>
</dbReference>
<dbReference type="SMR" id="B7KIT4"/>
<dbReference type="STRING" id="65393.PCC7424_2349"/>
<dbReference type="KEGG" id="cyc:PCC7424_2349"/>
<dbReference type="eggNOG" id="COG0239">
    <property type="taxonomic scope" value="Bacteria"/>
</dbReference>
<dbReference type="HOGENOM" id="CLU_114342_3_2_3"/>
<dbReference type="OrthoDB" id="428493at2"/>
<dbReference type="Proteomes" id="UP000002384">
    <property type="component" value="Chromosome"/>
</dbReference>
<dbReference type="GO" id="GO:0005886">
    <property type="term" value="C:plasma membrane"/>
    <property type="evidence" value="ECO:0007669"/>
    <property type="project" value="UniProtKB-SubCell"/>
</dbReference>
<dbReference type="GO" id="GO:0062054">
    <property type="term" value="F:fluoride channel activity"/>
    <property type="evidence" value="ECO:0007669"/>
    <property type="project" value="UniProtKB-UniRule"/>
</dbReference>
<dbReference type="GO" id="GO:0046872">
    <property type="term" value="F:metal ion binding"/>
    <property type="evidence" value="ECO:0007669"/>
    <property type="project" value="UniProtKB-KW"/>
</dbReference>
<dbReference type="GO" id="GO:0140114">
    <property type="term" value="P:cellular detoxification of fluoride"/>
    <property type="evidence" value="ECO:0007669"/>
    <property type="project" value="UniProtKB-UniRule"/>
</dbReference>
<dbReference type="HAMAP" id="MF_00454">
    <property type="entry name" value="FluC"/>
    <property type="match status" value="1"/>
</dbReference>
<dbReference type="InterPro" id="IPR003691">
    <property type="entry name" value="FluC"/>
</dbReference>
<dbReference type="NCBIfam" id="TIGR00494">
    <property type="entry name" value="crcB"/>
    <property type="match status" value="1"/>
</dbReference>
<dbReference type="PANTHER" id="PTHR28259">
    <property type="entry name" value="FLUORIDE EXPORT PROTEIN 1-RELATED"/>
    <property type="match status" value="1"/>
</dbReference>
<dbReference type="PANTHER" id="PTHR28259:SF1">
    <property type="entry name" value="FLUORIDE EXPORT PROTEIN 1-RELATED"/>
    <property type="match status" value="1"/>
</dbReference>
<dbReference type="Pfam" id="PF02537">
    <property type="entry name" value="CRCB"/>
    <property type="match status" value="1"/>
</dbReference>
<gene>
    <name evidence="1" type="primary">fluC</name>
    <name evidence="1" type="synonym">crcB</name>
    <name type="ordered locus">PCC7424_2349</name>
</gene>
<sequence>MLEILLVFLGGGLGSIARYLMGQLMTIHFPNILSLGTFTVNIIGSFIIGLVISLINKNQWNPQIGLLLATGFCGGFTTFSSFSYENTAYLKNNDYLLSFGYTIMSLFWGFAATFLGIYLVKRG</sequence>
<organism>
    <name type="scientific">Gloeothece citriformis (strain PCC 7424)</name>
    <name type="common">Cyanothece sp. (strain PCC 7424)</name>
    <dbReference type="NCBI Taxonomy" id="65393"/>
    <lineage>
        <taxon>Bacteria</taxon>
        <taxon>Bacillati</taxon>
        <taxon>Cyanobacteriota</taxon>
        <taxon>Cyanophyceae</taxon>
        <taxon>Oscillatoriophycideae</taxon>
        <taxon>Chroococcales</taxon>
        <taxon>Aphanothecaceae</taxon>
        <taxon>Gloeothece</taxon>
        <taxon>Gloeothece citriformis</taxon>
    </lineage>
</organism>
<comment type="function">
    <text evidence="1">Fluoride-specific ion channel. Important for reducing fluoride concentration in the cell, thus reducing its toxicity.</text>
</comment>
<comment type="catalytic activity">
    <reaction evidence="1">
        <text>fluoride(in) = fluoride(out)</text>
        <dbReference type="Rhea" id="RHEA:76159"/>
        <dbReference type="ChEBI" id="CHEBI:17051"/>
    </reaction>
    <physiologicalReaction direction="left-to-right" evidence="1">
        <dbReference type="Rhea" id="RHEA:76160"/>
    </physiologicalReaction>
</comment>
<comment type="activity regulation">
    <text evidence="1">Na(+) is not transported, but it plays an essential structural role and its presence is essential for fluoride channel function.</text>
</comment>
<comment type="subcellular location">
    <subcellularLocation>
        <location evidence="1">Cell inner membrane</location>
        <topology evidence="1">Multi-pass membrane protein</topology>
    </subcellularLocation>
</comment>
<comment type="similarity">
    <text evidence="1">Belongs to the fluoride channel Fluc/FEX (TC 1.A.43) family.</text>
</comment>
<evidence type="ECO:0000255" key="1">
    <source>
        <dbReference type="HAMAP-Rule" id="MF_00454"/>
    </source>
</evidence>
<proteinExistence type="inferred from homology"/>